<proteinExistence type="inferred from homology"/>
<sequence length="418" mass="47595">MNKLAIIGAQWGDEGKGKVVNYFSQFNDIIVRSSGGANAGHTIYFKDKKYVHHLLPSITFDTDSKGFLAKGMVIELEQMIEELKVLEADFPGISKRFMVDVETFIVLPYHKEEDGLLESMRKNPIGTTKRGIGPAYQDKAARQNVRIIDLFDDELLRERVEEIVYLKNNIYEGKMHIDVDETVNYLLDKFDQLLKLGVTFTSASEIEDEIKNKRVLFEGAQGIMLDLDSGTYPYVTSSTTTAYSASCADVTLTDDDTIMGVVKAYTSRVGEGEFPTELFDEEADKLRKLGNEFGATTGRNRRVGWIDLAQLRYAIKKSKINSIVMTKADVLNGYDKVKVCVGYEIDGVEQKMPFISNDFKKAKPIYKEFDGWNDVFEVNFLKYMTFIEKELDTEISYVSYGPKTEEIMEKRDFIMNIK</sequence>
<accession>B0RZL3</accession>
<keyword id="KW-0963">Cytoplasm</keyword>
<keyword id="KW-0342">GTP-binding</keyword>
<keyword id="KW-0436">Ligase</keyword>
<keyword id="KW-0460">Magnesium</keyword>
<keyword id="KW-0479">Metal-binding</keyword>
<keyword id="KW-0547">Nucleotide-binding</keyword>
<keyword id="KW-0658">Purine biosynthesis</keyword>
<keyword id="KW-1185">Reference proteome</keyword>
<reference key="1">
    <citation type="journal article" date="2008" name="DNA Res.">
        <title>Complete genome sequence of Finegoldia magna, an anaerobic opportunistic pathogen.</title>
        <authorList>
            <person name="Goto T."/>
            <person name="Yamashita A."/>
            <person name="Hirakawa H."/>
            <person name="Matsutani M."/>
            <person name="Todo K."/>
            <person name="Ohshima K."/>
            <person name="Toh H."/>
            <person name="Miyamoto K."/>
            <person name="Kuhara S."/>
            <person name="Hattori M."/>
            <person name="Shimizu T."/>
            <person name="Akimoto S."/>
        </authorList>
    </citation>
    <scope>NUCLEOTIDE SEQUENCE [LARGE SCALE GENOMIC DNA]</scope>
    <source>
        <strain>ATCC 29328 / DSM 20472 / WAL 2508</strain>
    </source>
</reference>
<organism>
    <name type="scientific">Finegoldia magna (strain ATCC 29328 / DSM 20472 / WAL 2508)</name>
    <name type="common">Peptostreptococcus magnus</name>
    <dbReference type="NCBI Taxonomy" id="334413"/>
    <lineage>
        <taxon>Bacteria</taxon>
        <taxon>Bacillati</taxon>
        <taxon>Bacillota</taxon>
        <taxon>Tissierellia</taxon>
        <taxon>Tissierellales</taxon>
        <taxon>Peptoniphilaceae</taxon>
        <taxon>Finegoldia</taxon>
    </lineage>
</organism>
<protein>
    <recommendedName>
        <fullName evidence="1">Adenylosuccinate synthetase</fullName>
        <shortName evidence="1">AMPSase</shortName>
        <shortName evidence="1">AdSS</shortName>
        <ecNumber evidence="1">6.3.4.4</ecNumber>
    </recommendedName>
    <alternativeName>
        <fullName evidence="1">IMP--aspartate ligase</fullName>
    </alternativeName>
</protein>
<gene>
    <name evidence="1" type="primary">purA</name>
    <name type="ordered locus">FMG_0136</name>
</gene>
<comment type="function">
    <text evidence="1">Plays an important role in the de novo pathway of purine nucleotide biosynthesis. Catalyzes the first committed step in the biosynthesis of AMP from IMP.</text>
</comment>
<comment type="catalytic activity">
    <reaction evidence="1">
        <text>IMP + L-aspartate + GTP = N(6)-(1,2-dicarboxyethyl)-AMP + GDP + phosphate + 2 H(+)</text>
        <dbReference type="Rhea" id="RHEA:15753"/>
        <dbReference type="ChEBI" id="CHEBI:15378"/>
        <dbReference type="ChEBI" id="CHEBI:29991"/>
        <dbReference type="ChEBI" id="CHEBI:37565"/>
        <dbReference type="ChEBI" id="CHEBI:43474"/>
        <dbReference type="ChEBI" id="CHEBI:57567"/>
        <dbReference type="ChEBI" id="CHEBI:58053"/>
        <dbReference type="ChEBI" id="CHEBI:58189"/>
        <dbReference type="EC" id="6.3.4.4"/>
    </reaction>
</comment>
<comment type="cofactor">
    <cofactor evidence="1">
        <name>Mg(2+)</name>
        <dbReference type="ChEBI" id="CHEBI:18420"/>
    </cofactor>
    <text evidence="1">Binds 1 Mg(2+) ion per subunit.</text>
</comment>
<comment type="pathway">
    <text evidence="1">Purine metabolism; AMP biosynthesis via de novo pathway; AMP from IMP: step 1/2.</text>
</comment>
<comment type="subunit">
    <text evidence="1">Homodimer.</text>
</comment>
<comment type="subcellular location">
    <subcellularLocation>
        <location evidence="1">Cytoplasm</location>
    </subcellularLocation>
</comment>
<comment type="similarity">
    <text evidence="1">Belongs to the adenylosuccinate synthetase family.</text>
</comment>
<evidence type="ECO:0000255" key="1">
    <source>
        <dbReference type="HAMAP-Rule" id="MF_00011"/>
    </source>
</evidence>
<dbReference type="EC" id="6.3.4.4" evidence="1"/>
<dbReference type="EMBL" id="AP008971">
    <property type="protein sequence ID" value="BAG07554.1"/>
    <property type="molecule type" value="Genomic_DNA"/>
</dbReference>
<dbReference type="RefSeq" id="WP_002837377.1">
    <property type="nucleotide sequence ID" value="NC_010376.1"/>
</dbReference>
<dbReference type="SMR" id="B0RZL3"/>
<dbReference type="STRING" id="334413.FMG_0136"/>
<dbReference type="KEGG" id="fma:FMG_0136"/>
<dbReference type="eggNOG" id="COG0104">
    <property type="taxonomic scope" value="Bacteria"/>
</dbReference>
<dbReference type="HOGENOM" id="CLU_029848_0_0_9"/>
<dbReference type="UniPathway" id="UPA00075">
    <property type="reaction ID" value="UER00335"/>
</dbReference>
<dbReference type="Proteomes" id="UP000001319">
    <property type="component" value="Chromosome"/>
</dbReference>
<dbReference type="GO" id="GO:0005737">
    <property type="term" value="C:cytoplasm"/>
    <property type="evidence" value="ECO:0007669"/>
    <property type="project" value="UniProtKB-SubCell"/>
</dbReference>
<dbReference type="GO" id="GO:0004019">
    <property type="term" value="F:adenylosuccinate synthase activity"/>
    <property type="evidence" value="ECO:0007669"/>
    <property type="project" value="UniProtKB-UniRule"/>
</dbReference>
<dbReference type="GO" id="GO:0005525">
    <property type="term" value="F:GTP binding"/>
    <property type="evidence" value="ECO:0007669"/>
    <property type="project" value="UniProtKB-UniRule"/>
</dbReference>
<dbReference type="GO" id="GO:0000287">
    <property type="term" value="F:magnesium ion binding"/>
    <property type="evidence" value="ECO:0007669"/>
    <property type="project" value="UniProtKB-UniRule"/>
</dbReference>
<dbReference type="GO" id="GO:0044208">
    <property type="term" value="P:'de novo' AMP biosynthetic process"/>
    <property type="evidence" value="ECO:0007669"/>
    <property type="project" value="UniProtKB-UniRule"/>
</dbReference>
<dbReference type="GO" id="GO:0046040">
    <property type="term" value="P:IMP metabolic process"/>
    <property type="evidence" value="ECO:0007669"/>
    <property type="project" value="TreeGrafter"/>
</dbReference>
<dbReference type="CDD" id="cd03108">
    <property type="entry name" value="AdSS"/>
    <property type="match status" value="1"/>
</dbReference>
<dbReference type="FunFam" id="1.10.300.10:FF:000001">
    <property type="entry name" value="Adenylosuccinate synthetase"/>
    <property type="match status" value="1"/>
</dbReference>
<dbReference type="FunFam" id="3.90.170.10:FF:000001">
    <property type="entry name" value="Adenylosuccinate synthetase"/>
    <property type="match status" value="1"/>
</dbReference>
<dbReference type="Gene3D" id="3.40.440.10">
    <property type="entry name" value="Adenylosuccinate Synthetase, subunit A, domain 1"/>
    <property type="match status" value="1"/>
</dbReference>
<dbReference type="Gene3D" id="1.10.300.10">
    <property type="entry name" value="Adenylosuccinate Synthetase, subunit A, domain 2"/>
    <property type="match status" value="1"/>
</dbReference>
<dbReference type="Gene3D" id="3.90.170.10">
    <property type="entry name" value="Adenylosuccinate Synthetase, subunit A, domain 3"/>
    <property type="match status" value="1"/>
</dbReference>
<dbReference type="HAMAP" id="MF_00011">
    <property type="entry name" value="Adenylosucc_synth"/>
    <property type="match status" value="1"/>
</dbReference>
<dbReference type="InterPro" id="IPR018220">
    <property type="entry name" value="Adenylosuccin_syn_GTP-bd"/>
</dbReference>
<dbReference type="InterPro" id="IPR033128">
    <property type="entry name" value="Adenylosuccin_syn_Lys_AS"/>
</dbReference>
<dbReference type="InterPro" id="IPR042109">
    <property type="entry name" value="Adenylosuccinate_synth_dom1"/>
</dbReference>
<dbReference type="InterPro" id="IPR042110">
    <property type="entry name" value="Adenylosuccinate_synth_dom2"/>
</dbReference>
<dbReference type="InterPro" id="IPR042111">
    <property type="entry name" value="Adenylosuccinate_synth_dom3"/>
</dbReference>
<dbReference type="InterPro" id="IPR001114">
    <property type="entry name" value="Adenylosuccinate_synthetase"/>
</dbReference>
<dbReference type="InterPro" id="IPR027417">
    <property type="entry name" value="P-loop_NTPase"/>
</dbReference>
<dbReference type="NCBIfam" id="NF002223">
    <property type="entry name" value="PRK01117.1"/>
    <property type="match status" value="1"/>
</dbReference>
<dbReference type="NCBIfam" id="NF010355">
    <property type="entry name" value="PRK13783.1"/>
    <property type="match status" value="1"/>
</dbReference>
<dbReference type="PANTHER" id="PTHR11846">
    <property type="entry name" value="ADENYLOSUCCINATE SYNTHETASE"/>
    <property type="match status" value="1"/>
</dbReference>
<dbReference type="PANTHER" id="PTHR11846:SF0">
    <property type="entry name" value="ADENYLOSUCCINATE SYNTHETASE"/>
    <property type="match status" value="1"/>
</dbReference>
<dbReference type="Pfam" id="PF00709">
    <property type="entry name" value="Adenylsucc_synt"/>
    <property type="match status" value="1"/>
</dbReference>
<dbReference type="SMART" id="SM00788">
    <property type="entry name" value="Adenylsucc_synt"/>
    <property type="match status" value="1"/>
</dbReference>
<dbReference type="SUPFAM" id="SSF52540">
    <property type="entry name" value="P-loop containing nucleoside triphosphate hydrolases"/>
    <property type="match status" value="1"/>
</dbReference>
<dbReference type="PROSITE" id="PS01266">
    <property type="entry name" value="ADENYLOSUCCIN_SYN_1"/>
    <property type="match status" value="1"/>
</dbReference>
<dbReference type="PROSITE" id="PS00513">
    <property type="entry name" value="ADENYLOSUCCIN_SYN_2"/>
    <property type="match status" value="1"/>
</dbReference>
<name>PURA_FINM2</name>
<feature type="chain" id="PRO_1000089294" description="Adenylosuccinate synthetase">
    <location>
        <begin position="1"/>
        <end position="418"/>
    </location>
</feature>
<feature type="active site" description="Proton acceptor" evidence="1">
    <location>
        <position position="13"/>
    </location>
</feature>
<feature type="active site" description="Proton donor" evidence="1">
    <location>
        <position position="41"/>
    </location>
</feature>
<feature type="binding site" evidence="1">
    <location>
        <begin position="12"/>
        <end position="18"/>
    </location>
    <ligand>
        <name>GTP</name>
        <dbReference type="ChEBI" id="CHEBI:37565"/>
    </ligand>
</feature>
<feature type="binding site" description="in other chain" evidence="1">
    <location>
        <begin position="13"/>
        <end position="16"/>
    </location>
    <ligand>
        <name>IMP</name>
        <dbReference type="ChEBI" id="CHEBI:58053"/>
        <note>ligand shared between dimeric partners</note>
    </ligand>
</feature>
<feature type="binding site" evidence="1">
    <location>
        <position position="13"/>
    </location>
    <ligand>
        <name>Mg(2+)</name>
        <dbReference type="ChEBI" id="CHEBI:18420"/>
    </ligand>
</feature>
<feature type="binding site" description="in other chain" evidence="1">
    <location>
        <begin position="38"/>
        <end position="41"/>
    </location>
    <ligand>
        <name>IMP</name>
        <dbReference type="ChEBI" id="CHEBI:58053"/>
        <note>ligand shared between dimeric partners</note>
    </ligand>
</feature>
<feature type="binding site" evidence="1">
    <location>
        <begin position="40"/>
        <end position="42"/>
    </location>
    <ligand>
        <name>GTP</name>
        <dbReference type="ChEBI" id="CHEBI:37565"/>
    </ligand>
</feature>
<feature type="binding site" evidence="1">
    <location>
        <position position="40"/>
    </location>
    <ligand>
        <name>Mg(2+)</name>
        <dbReference type="ChEBI" id="CHEBI:18420"/>
    </ligand>
</feature>
<feature type="binding site" description="in other chain" evidence="1">
    <location>
        <position position="128"/>
    </location>
    <ligand>
        <name>IMP</name>
        <dbReference type="ChEBI" id="CHEBI:58053"/>
        <note>ligand shared between dimeric partners</note>
    </ligand>
</feature>
<feature type="binding site" evidence="1">
    <location>
        <position position="142"/>
    </location>
    <ligand>
        <name>IMP</name>
        <dbReference type="ChEBI" id="CHEBI:58053"/>
        <note>ligand shared between dimeric partners</note>
    </ligand>
</feature>
<feature type="binding site" description="in other chain" evidence="1">
    <location>
        <position position="221"/>
    </location>
    <ligand>
        <name>IMP</name>
        <dbReference type="ChEBI" id="CHEBI:58053"/>
        <note>ligand shared between dimeric partners</note>
    </ligand>
</feature>
<feature type="binding site" description="in other chain" evidence="1">
    <location>
        <position position="236"/>
    </location>
    <ligand>
        <name>IMP</name>
        <dbReference type="ChEBI" id="CHEBI:58053"/>
        <note>ligand shared between dimeric partners</note>
    </ligand>
</feature>
<feature type="binding site" evidence="1">
    <location>
        <begin position="295"/>
        <end position="301"/>
    </location>
    <ligand>
        <name>substrate</name>
    </ligand>
</feature>
<feature type="binding site" description="in other chain" evidence="1">
    <location>
        <position position="299"/>
    </location>
    <ligand>
        <name>IMP</name>
        <dbReference type="ChEBI" id="CHEBI:58053"/>
        <note>ligand shared between dimeric partners</note>
    </ligand>
</feature>
<feature type="binding site" evidence="1">
    <location>
        <position position="301"/>
    </location>
    <ligand>
        <name>GTP</name>
        <dbReference type="ChEBI" id="CHEBI:37565"/>
    </ligand>
</feature>
<feature type="binding site" evidence="1">
    <location>
        <begin position="327"/>
        <end position="329"/>
    </location>
    <ligand>
        <name>GTP</name>
        <dbReference type="ChEBI" id="CHEBI:37565"/>
    </ligand>
</feature>
<feature type="binding site" evidence="1">
    <location>
        <begin position="399"/>
        <end position="401"/>
    </location>
    <ligand>
        <name>GTP</name>
        <dbReference type="ChEBI" id="CHEBI:37565"/>
    </ligand>
</feature>